<organism>
    <name type="scientific">Escherichia phage P1</name>
    <name type="common">Bacteriophage P1</name>
    <dbReference type="NCBI Taxonomy" id="2886926"/>
    <lineage>
        <taxon>Viruses</taxon>
        <taxon>Duplodnaviria</taxon>
        <taxon>Heunggongvirae</taxon>
        <taxon>Uroviricota</taxon>
        <taxon>Caudoviricetes</taxon>
        <taxon>Punavirus</taxon>
        <taxon>Punavirus P1</taxon>
    </lineage>
</organism>
<evidence type="ECO:0000250" key="1"/>
<evidence type="ECO:0000256" key="2">
    <source>
        <dbReference type="SAM" id="MobiDB-lite"/>
    </source>
</evidence>
<gene>
    <name type="primary">ssb</name>
</gene>
<proteinExistence type="inferred from homology"/>
<keyword id="KW-0227">DNA damage</keyword>
<keyword id="KW-0234">DNA repair</keyword>
<keyword id="KW-0235">DNA replication</keyword>
<keyword id="KW-0238">DNA-binding</keyword>
<keyword id="KW-1185">Reference proteome</keyword>
<sequence length="162" mass="18056">MAQRGVNKVILIGTLGQDPEIRYIPNGGAVGRLSIATNESWRDKQTGQQKEQTEWHKVVLFGKLAEIASEYLRKGSQVYIEGKLKTRKWTDDAGVERYTTEIIVSQGGTMQMIGARRDDSQSSNGWGQSNQPQNHQQYSGGGKPQSNANNEPPMDFDDDIPF</sequence>
<comment type="function">
    <text evidence="1">This protein is essential for replication of the chromosomes and its single-stranded DNA phages. It is also involved in DNA recombination and repair (By similarity).</text>
</comment>
<reference key="1">
    <citation type="journal article" date="1999" name="J. Bacteriol.">
        <title>Identification and characterization of the single-stranded DNA-binding protein of bacteriophage P1.</title>
        <authorList>
            <person name="Lehnherr H."/>
            <person name="Bendtsen J.D."/>
            <person name="Preuss F."/>
            <person name="Ilyina T.V."/>
        </authorList>
    </citation>
    <scope>NUCLEOTIDE SEQUENCE [GENOMIC DNA]</scope>
</reference>
<reference key="2">
    <citation type="journal article" date="2004" name="J. Bacteriol.">
        <title>Genome of bacteriophage P1.</title>
        <authorList>
            <person name="Lobocka M.B."/>
            <person name="Rose D.J."/>
            <person name="Plunkett G. III"/>
            <person name="Rusin M."/>
            <person name="Samojedny A."/>
            <person name="Lehnherr H."/>
            <person name="Yarmolinsky M.B."/>
            <person name="Blattner F.R."/>
        </authorList>
    </citation>
    <scope>NUCLEOTIDE SEQUENCE [LARGE SCALE GENOMIC DNA]</scope>
</reference>
<protein>
    <recommendedName>
        <fullName>Single-stranded DNA-binding protein</fullName>
    </recommendedName>
    <alternativeName>
        <fullName>SSB-P1</fullName>
    </alternativeName>
</protein>
<name>SSB_BPP1</name>
<dbReference type="EMBL" id="AF125376">
    <property type="protein sequence ID" value="AAD20631.1"/>
    <property type="molecule type" value="Genomic_DNA"/>
</dbReference>
<dbReference type="EMBL" id="AF234172">
    <property type="protein sequence ID" value="AAQ13990.1"/>
    <property type="molecule type" value="Genomic_DNA"/>
</dbReference>
<dbReference type="EMBL" id="AF234173">
    <property type="protein sequence ID" value="AAQ14098.1"/>
    <property type="molecule type" value="Genomic_DNA"/>
</dbReference>
<dbReference type="RefSeq" id="YP_006485.1">
    <property type="nucleotide sequence ID" value="NC_005856.1"/>
</dbReference>
<dbReference type="SMR" id="Q9XJG4"/>
<dbReference type="GeneID" id="2777409"/>
<dbReference type="KEGG" id="vg:2777409"/>
<dbReference type="Proteomes" id="UP000001577">
    <property type="component" value="Segment"/>
</dbReference>
<dbReference type="Proteomes" id="UP000008091">
    <property type="component" value="Genome"/>
</dbReference>
<dbReference type="GO" id="GO:0009295">
    <property type="term" value="C:nucleoid"/>
    <property type="evidence" value="ECO:0007669"/>
    <property type="project" value="TreeGrafter"/>
</dbReference>
<dbReference type="GO" id="GO:0003697">
    <property type="term" value="F:single-stranded DNA binding"/>
    <property type="evidence" value="ECO:0007669"/>
    <property type="project" value="InterPro"/>
</dbReference>
<dbReference type="GO" id="GO:0006281">
    <property type="term" value="P:DNA repair"/>
    <property type="evidence" value="ECO:0007669"/>
    <property type="project" value="UniProtKB-KW"/>
</dbReference>
<dbReference type="GO" id="GO:0006260">
    <property type="term" value="P:DNA replication"/>
    <property type="evidence" value="ECO:0007669"/>
    <property type="project" value="UniProtKB-KW"/>
</dbReference>
<dbReference type="CDD" id="cd04496">
    <property type="entry name" value="SSB_OBF"/>
    <property type="match status" value="1"/>
</dbReference>
<dbReference type="Gene3D" id="2.40.50.140">
    <property type="entry name" value="Nucleic acid-binding proteins"/>
    <property type="match status" value="1"/>
</dbReference>
<dbReference type="HAMAP" id="MF_00984">
    <property type="entry name" value="SSB"/>
    <property type="match status" value="1"/>
</dbReference>
<dbReference type="InterPro" id="IPR012340">
    <property type="entry name" value="NA-bd_OB-fold"/>
</dbReference>
<dbReference type="InterPro" id="IPR000424">
    <property type="entry name" value="Primosome_PriB/ssb"/>
</dbReference>
<dbReference type="InterPro" id="IPR011344">
    <property type="entry name" value="ssDNA-bd"/>
</dbReference>
<dbReference type="NCBIfam" id="NF006533">
    <property type="entry name" value="PRK09010.1"/>
    <property type="match status" value="1"/>
</dbReference>
<dbReference type="NCBIfam" id="TIGR00621">
    <property type="entry name" value="ssb"/>
    <property type="match status" value="1"/>
</dbReference>
<dbReference type="PANTHER" id="PTHR10302">
    <property type="entry name" value="SINGLE-STRANDED DNA-BINDING PROTEIN"/>
    <property type="match status" value="1"/>
</dbReference>
<dbReference type="PANTHER" id="PTHR10302:SF27">
    <property type="entry name" value="SINGLE-STRANDED DNA-BINDING PROTEIN"/>
    <property type="match status" value="1"/>
</dbReference>
<dbReference type="Pfam" id="PF00436">
    <property type="entry name" value="SSB"/>
    <property type="match status" value="1"/>
</dbReference>
<dbReference type="PIRSF" id="PIRSF002070">
    <property type="entry name" value="SSB"/>
    <property type="match status" value="1"/>
</dbReference>
<dbReference type="SUPFAM" id="SSF50249">
    <property type="entry name" value="Nucleic acid-binding proteins"/>
    <property type="match status" value="1"/>
</dbReference>
<dbReference type="PROSITE" id="PS50935">
    <property type="entry name" value="SSB"/>
    <property type="match status" value="1"/>
</dbReference>
<feature type="chain" id="PRO_0000096151" description="Single-stranded DNA-binding protein">
    <location>
        <begin position="1"/>
        <end position="162"/>
    </location>
</feature>
<feature type="domain" description="SSB">
    <location>
        <begin position="6"/>
        <end position="111"/>
    </location>
</feature>
<feature type="region of interest" description="Disordered" evidence="2">
    <location>
        <begin position="116"/>
        <end position="162"/>
    </location>
</feature>
<feature type="compositionally biased region" description="Low complexity" evidence="2">
    <location>
        <begin position="121"/>
        <end position="134"/>
    </location>
</feature>
<accession>Q9XJG4</accession>
<organismHost>
    <name type="scientific">Enterobacteriaceae</name>
    <dbReference type="NCBI Taxonomy" id="543"/>
</organismHost>